<evidence type="ECO:0000255" key="1">
    <source>
        <dbReference type="HAMAP-Rule" id="MF_00386"/>
    </source>
</evidence>
<reference key="1">
    <citation type="journal article" date="2004" name="J. Mol. Microbiol. Biotechnol.">
        <title>The complete genome sequence of Bacillus licheniformis DSM13, an organism with great industrial potential.</title>
        <authorList>
            <person name="Veith B."/>
            <person name="Herzberg C."/>
            <person name="Steckel S."/>
            <person name="Feesche J."/>
            <person name="Maurer K.H."/>
            <person name="Ehrenreich P."/>
            <person name="Baeumer S."/>
            <person name="Henne A."/>
            <person name="Liesegang H."/>
            <person name="Merkl R."/>
            <person name="Ehrenreich A."/>
            <person name="Gottschalk G."/>
        </authorList>
    </citation>
    <scope>NUCLEOTIDE SEQUENCE [LARGE SCALE GENOMIC DNA]</scope>
    <source>
        <strain>ATCC 14580 / DSM 13 / JCM 2505 / CCUG 7422 / NBRC 12200 / NCIMB 9375 / NCTC 10341 / NRRL NRS-1264 / Gibson 46</strain>
    </source>
</reference>
<reference key="2">
    <citation type="journal article" date="2004" name="Genome Biol.">
        <title>Complete genome sequence of the industrial bacterium Bacillus licheniformis and comparisons with closely related Bacillus species.</title>
        <authorList>
            <person name="Rey M.W."/>
            <person name="Ramaiya P."/>
            <person name="Nelson B.A."/>
            <person name="Brody-Karpin S.D."/>
            <person name="Zaretsky E.J."/>
            <person name="Tang M."/>
            <person name="Lopez de Leon A."/>
            <person name="Xiang H."/>
            <person name="Gusti V."/>
            <person name="Clausen I.G."/>
            <person name="Olsen P.B."/>
            <person name="Rasmussen M.D."/>
            <person name="Andersen J.T."/>
            <person name="Joergensen P.L."/>
            <person name="Larsen T.S."/>
            <person name="Sorokin A."/>
            <person name="Bolotin A."/>
            <person name="Lapidus A."/>
            <person name="Galleron N."/>
            <person name="Ehrlich S.D."/>
            <person name="Berka R.M."/>
        </authorList>
    </citation>
    <scope>NUCLEOTIDE SEQUENCE [LARGE SCALE GENOMIC DNA]</scope>
    <source>
        <strain>ATCC 14580 / DSM 13 / JCM 2505 / CCUG 7422 / NBRC 12200 / NCIMB 9375 / NCTC 10341 / NRRL NRS-1264 / Gibson 46</strain>
    </source>
</reference>
<sequence length="81" mass="9292">MKRAAIIFIRFYQKAISPLFPPTCRFYPTCSNYGLEAIQRFGFIKGSYLLIKRLLKCHPLHPGGFDPVPNQTDQKKEGDSD</sequence>
<accession>Q65GZ1</accession>
<accession>Q62SF2</accession>
<name>YIDD1_BACLD</name>
<keyword id="KW-1003">Cell membrane</keyword>
<keyword id="KW-0472">Membrane</keyword>
<keyword id="KW-1185">Reference proteome</keyword>
<gene>
    <name type="ordered locus">BLi02802</name>
    <name type="ordered locus">BL05278</name>
</gene>
<organism>
    <name type="scientific">Bacillus licheniformis (strain ATCC 14580 / DSM 13 / JCM 2505 / CCUG 7422 / NBRC 12200 / NCIMB 9375 / NCTC 10341 / NRRL NRS-1264 / Gibson 46)</name>
    <dbReference type="NCBI Taxonomy" id="279010"/>
    <lineage>
        <taxon>Bacteria</taxon>
        <taxon>Bacillati</taxon>
        <taxon>Bacillota</taxon>
        <taxon>Bacilli</taxon>
        <taxon>Bacillales</taxon>
        <taxon>Bacillaceae</taxon>
        <taxon>Bacillus</taxon>
    </lineage>
</organism>
<feature type="chain" id="PRO_0000253075" description="Putative membrane protein insertion efficiency factor 1">
    <location>
        <begin position="1"/>
        <end position="81"/>
    </location>
</feature>
<protein>
    <recommendedName>
        <fullName evidence="1">Putative membrane protein insertion efficiency factor 1</fullName>
    </recommendedName>
</protein>
<dbReference type="EMBL" id="AE017333">
    <property type="protein sequence ID" value="AAU41673.1"/>
    <property type="molecule type" value="Genomic_DNA"/>
</dbReference>
<dbReference type="EMBL" id="CP000002">
    <property type="protein sequence ID" value="AAU24307.1"/>
    <property type="molecule type" value="Genomic_DNA"/>
</dbReference>
<dbReference type="STRING" id="279010.BL05278"/>
<dbReference type="KEGG" id="bld:BLi02802"/>
<dbReference type="KEGG" id="bli:BL05278"/>
<dbReference type="eggNOG" id="COG0759">
    <property type="taxonomic scope" value="Bacteria"/>
</dbReference>
<dbReference type="HOGENOM" id="CLU_144811_6_0_9"/>
<dbReference type="Proteomes" id="UP000000606">
    <property type="component" value="Chromosome"/>
</dbReference>
<dbReference type="GO" id="GO:0005886">
    <property type="term" value="C:plasma membrane"/>
    <property type="evidence" value="ECO:0007669"/>
    <property type="project" value="UniProtKB-SubCell"/>
</dbReference>
<dbReference type="HAMAP" id="MF_00386">
    <property type="entry name" value="UPF0161_YidD"/>
    <property type="match status" value="1"/>
</dbReference>
<dbReference type="InterPro" id="IPR002696">
    <property type="entry name" value="Membr_insert_effic_factor_YidD"/>
</dbReference>
<dbReference type="NCBIfam" id="TIGR00278">
    <property type="entry name" value="membrane protein insertion efficiency factor YidD"/>
    <property type="match status" value="1"/>
</dbReference>
<dbReference type="PANTHER" id="PTHR33383">
    <property type="entry name" value="MEMBRANE PROTEIN INSERTION EFFICIENCY FACTOR-RELATED"/>
    <property type="match status" value="1"/>
</dbReference>
<dbReference type="PANTHER" id="PTHR33383:SF1">
    <property type="entry name" value="MEMBRANE PROTEIN INSERTION EFFICIENCY FACTOR-RELATED"/>
    <property type="match status" value="1"/>
</dbReference>
<dbReference type="Pfam" id="PF01809">
    <property type="entry name" value="YidD"/>
    <property type="match status" value="1"/>
</dbReference>
<dbReference type="SMART" id="SM01234">
    <property type="entry name" value="Haemolytic"/>
    <property type="match status" value="1"/>
</dbReference>
<comment type="function">
    <text evidence="1">Could be involved in insertion of integral membrane proteins into the membrane.</text>
</comment>
<comment type="subcellular location">
    <subcellularLocation>
        <location evidence="1">Cell membrane</location>
        <topology evidence="1">Peripheral membrane protein</topology>
        <orientation evidence="1">Cytoplasmic side</orientation>
    </subcellularLocation>
</comment>
<comment type="similarity">
    <text evidence="1">Belongs to the UPF0161 family.</text>
</comment>
<proteinExistence type="inferred from homology"/>